<protein>
    <recommendedName>
        <fullName evidence="6">Odorranain-A6</fullName>
    </recommendedName>
</protein>
<sequence length="61" mass="6887">MFSMKKSLLLLFFLGTISLSLCEQERDAEEEEGSENGAEDIKINRVVKCSYRPGSPDSRCK</sequence>
<feature type="signal peptide" evidence="2">
    <location>
        <begin position="1"/>
        <end position="22"/>
    </location>
</feature>
<feature type="propeptide" id="PRO_0000423426" evidence="2 4">
    <location>
        <begin position="23"/>
        <end position="45"/>
    </location>
</feature>
<feature type="peptide" id="PRO_0000423427" description="Odorranain-A6" evidence="4">
    <location>
        <begin position="46"/>
        <end position="61"/>
    </location>
</feature>
<accession>E7EKD6</accession>
<name>ODRA6_ODOHA</name>
<comment type="subcellular location">
    <subcellularLocation>
        <location evidence="1">Secreted</location>
    </subcellularLocation>
</comment>
<comment type="tissue specificity">
    <text evidence="5">Expressed by the skin glands.</text>
</comment>
<comment type="similarity">
    <text evidence="2">Belongs to the frog skin active peptide (FSAP) family. Brevinin subfamily.</text>
</comment>
<organism>
    <name type="scientific">Odorrana hainanensis</name>
    <name type="common">Odor frog</name>
    <name type="synonym">Rana hainanensis</name>
    <dbReference type="NCBI Taxonomy" id="431935"/>
    <lineage>
        <taxon>Eukaryota</taxon>
        <taxon>Metazoa</taxon>
        <taxon>Chordata</taxon>
        <taxon>Craniata</taxon>
        <taxon>Vertebrata</taxon>
        <taxon>Euteleostomi</taxon>
        <taxon>Amphibia</taxon>
        <taxon>Batrachia</taxon>
        <taxon>Anura</taxon>
        <taxon>Neobatrachia</taxon>
        <taxon>Ranoidea</taxon>
        <taxon>Ranidae</taxon>
        <taxon>Odorrana</taxon>
    </lineage>
</organism>
<dbReference type="EMBL" id="HQ735113">
    <property type="protein sequence ID" value="ADV36136.1"/>
    <property type="molecule type" value="mRNA"/>
</dbReference>
<dbReference type="GO" id="GO:0005576">
    <property type="term" value="C:extracellular region"/>
    <property type="evidence" value="ECO:0007669"/>
    <property type="project" value="UniProtKB-SubCell"/>
</dbReference>
<dbReference type="GO" id="GO:0050829">
    <property type="term" value="P:defense response to Gram-negative bacterium"/>
    <property type="evidence" value="ECO:0007669"/>
    <property type="project" value="UniProtKB-ARBA"/>
</dbReference>
<dbReference type="GO" id="GO:0050830">
    <property type="term" value="P:defense response to Gram-positive bacterium"/>
    <property type="evidence" value="ECO:0007669"/>
    <property type="project" value="UniProtKB-ARBA"/>
</dbReference>
<dbReference type="InterPro" id="IPR004275">
    <property type="entry name" value="Frog_antimicrobial_propeptide"/>
</dbReference>
<dbReference type="Pfam" id="PF03032">
    <property type="entry name" value="FSAP_sig_propep"/>
    <property type="match status" value="1"/>
</dbReference>
<reference evidence="6" key="1">
    <citation type="journal article" date="2012" name="Peptides">
        <title>Novel antimicrobial peptides isolated from the skin secretions of Hainan odorous frog, Odorrana hainanensis.</title>
        <authorList>
            <person name="Wang H."/>
            <person name="Yu Z."/>
            <person name="Hu Y."/>
            <person name="Li F."/>
            <person name="Liu L."/>
            <person name="Zheng H."/>
            <person name="Meng H."/>
            <person name="Yang S."/>
            <person name="Yang X."/>
            <person name="Liu J."/>
        </authorList>
    </citation>
    <scope>NUCLEOTIDE SEQUENCE [MRNA]</scope>
    <source>
        <tissue evidence="3">Skin</tissue>
    </source>
</reference>
<proteinExistence type="inferred from homology"/>
<keyword id="KW-0878">Amphibian defense peptide</keyword>
<keyword id="KW-0964">Secreted</keyword>
<keyword id="KW-0732">Signal</keyword>
<evidence type="ECO:0000250" key="1">
    <source>
        <dbReference type="UniProtKB" id="P86093"/>
    </source>
</evidence>
<evidence type="ECO:0000255" key="2"/>
<evidence type="ECO:0000269" key="3">
    <source>
    </source>
</evidence>
<evidence type="ECO:0000303" key="4">
    <source>
    </source>
</evidence>
<evidence type="ECO:0000305" key="5">
    <source>
    </source>
</evidence>
<evidence type="ECO:0000312" key="6">
    <source>
        <dbReference type="EMBL" id="ADV36136.1"/>
    </source>
</evidence>